<feature type="chain" id="PRO_0000098707" description="Early endosome antigen 1">
    <location>
        <begin position="1"/>
        <end position="1411"/>
    </location>
</feature>
<feature type="zinc finger region" description="C2H2-type" evidence="4">
    <location>
        <begin position="41"/>
        <end position="64"/>
    </location>
</feature>
<feature type="zinc finger region" description="FYVE-type" evidence="5">
    <location>
        <begin position="1352"/>
        <end position="1410"/>
    </location>
</feature>
<feature type="region of interest" description="Disordered" evidence="6">
    <location>
        <begin position="1"/>
        <end position="27"/>
    </location>
</feature>
<feature type="region of interest" description="Disordered" evidence="6">
    <location>
        <begin position="476"/>
        <end position="501"/>
    </location>
</feature>
<feature type="region of interest" description="Disordered" evidence="6">
    <location>
        <begin position="1189"/>
        <end position="1217"/>
    </location>
</feature>
<feature type="coiled-coil region" evidence="3">
    <location>
        <begin position="78"/>
        <end position="1348"/>
    </location>
</feature>
<feature type="compositionally biased region" description="Polar residues" evidence="6">
    <location>
        <begin position="15"/>
        <end position="27"/>
    </location>
</feature>
<feature type="compositionally biased region" description="Basic and acidic residues" evidence="6">
    <location>
        <begin position="481"/>
        <end position="490"/>
    </location>
</feature>
<feature type="compositionally biased region" description="Low complexity" evidence="6">
    <location>
        <begin position="491"/>
        <end position="500"/>
    </location>
</feature>
<feature type="binding site" evidence="5">
    <location>
        <position position="1358"/>
    </location>
    <ligand>
        <name>Zn(2+)</name>
        <dbReference type="ChEBI" id="CHEBI:29105"/>
        <label>1</label>
    </ligand>
</feature>
<feature type="binding site" evidence="5">
    <location>
        <position position="1361"/>
    </location>
    <ligand>
        <name>Zn(2+)</name>
        <dbReference type="ChEBI" id="CHEBI:29105"/>
        <label>1</label>
    </ligand>
</feature>
<feature type="binding site" evidence="5">
    <location>
        <position position="1374"/>
    </location>
    <ligand>
        <name>Zn(2+)</name>
        <dbReference type="ChEBI" id="CHEBI:29105"/>
        <label>2</label>
    </ligand>
</feature>
<feature type="binding site" evidence="5">
    <location>
        <position position="1377"/>
    </location>
    <ligand>
        <name>Zn(2+)</name>
        <dbReference type="ChEBI" id="CHEBI:29105"/>
        <label>2</label>
    </ligand>
</feature>
<feature type="binding site" evidence="5">
    <location>
        <position position="1382"/>
    </location>
    <ligand>
        <name>Zn(2+)</name>
        <dbReference type="ChEBI" id="CHEBI:29105"/>
        <label>1</label>
    </ligand>
</feature>
<feature type="binding site" evidence="5">
    <location>
        <position position="1385"/>
    </location>
    <ligand>
        <name>Zn(2+)</name>
        <dbReference type="ChEBI" id="CHEBI:29105"/>
        <label>1</label>
    </ligand>
</feature>
<feature type="binding site" evidence="5">
    <location>
        <position position="1402"/>
    </location>
    <ligand>
        <name>Zn(2+)</name>
        <dbReference type="ChEBI" id="CHEBI:29105"/>
        <label>2</label>
    </ligand>
</feature>
<feature type="binding site" evidence="5">
    <location>
        <position position="1405"/>
    </location>
    <ligand>
        <name>Zn(2+)</name>
        <dbReference type="ChEBI" id="CHEBI:29105"/>
        <label>2</label>
    </ligand>
</feature>
<feature type="modified residue" description="Phosphoserine" evidence="2">
    <location>
        <position position="52"/>
    </location>
</feature>
<feature type="modified residue" description="Phosphoserine" evidence="2">
    <location>
        <position position="70"/>
    </location>
</feature>
<feature type="sequence conflict" description="In Ref. 2; BAC32647." evidence="7" ref="2">
    <original>V</original>
    <variation>I</variation>
    <location>
        <position position="225"/>
    </location>
</feature>
<dbReference type="EMBL" id="BC075637">
    <property type="protein sequence ID" value="AAH75637.1"/>
    <property type="molecule type" value="mRNA"/>
</dbReference>
<dbReference type="EMBL" id="AK046231">
    <property type="protein sequence ID" value="BAC32647.1"/>
    <property type="status" value="ALT_SEQ"/>
    <property type="molecule type" value="mRNA"/>
</dbReference>
<dbReference type="CCDS" id="CCDS36042.1"/>
<dbReference type="RefSeq" id="NP_001001932.1">
    <property type="nucleotide sequence ID" value="NM_001001932.3"/>
</dbReference>
<dbReference type="SMR" id="Q8BL66"/>
<dbReference type="BioGRID" id="229728">
    <property type="interactions" value="36"/>
</dbReference>
<dbReference type="FunCoup" id="Q8BL66">
    <property type="interactions" value="2714"/>
</dbReference>
<dbReference type="IntAct" id="Q8BL66">
    <property type="interactions" value="29"/>
</dbReference>
<dbReference type="MINT" id="Q8BL66"/>
<dbReference type="STRING" id="10090.ENSMUSP00000061493"/>
<dbReference type="GlyGen" id="Q8BL66">
    <property type="glycosylation" value="2 sites, 1 N-linked glycan (1 site), 1 O-linked glycan (1 site)"/>
</dbReference>
<dbReference type="iPTMnet" id="Q8BL66"/>
<dbReference type="PhosphoSitePlus" id="Q8BL66"/>
<dbReference type="SwissPalm" id="Q8BL66"/>
<dbReference type="REPRODUCTION-2DPAGE" id="IPI00453776"/>
<dbReference type="jPOST" id="Q8BL66"/>
<dbReference type="PaxDb" id="10090-ENSMUSP00000061493"/>
<dbReference type="PeptideAtlas" id="Q8BL66"/>
<dbReference type="ProteomicsDB" id="275903"/>
<dbReference type="Pumba" id="Q8BL66"/>
<dbReference type="Antibodypedia" id="3127">
    <property type="antibodies" value="542 antibodies from 45 providers"/>
</dbReference>
<dbReference type="DNASU" id="216238"/>
<dbReference type="Ensembl" id="ENSMUST00000053484.8">
    <property type="protein sequence ID" value="ENSMUSP00000061493.7"/>
    <property type="gene ID" value="ENSMUSG00000036499.10"/>
</dbReference>
<dbReference type="GeneID" id="216238"/>
<dbReference type="KEGG" id="mmu:216238"/>
<dbReference type="UCSC" id="uc007gwu.1">
    <property type="organism name" value="mouse"/>
</dbReference>
<dbReference type="AGR" id="MGI:2442192"/>
<dbReference type="CTD" id="8411"/>
<dbReference type="MGI" id="MGI:2442192">
    <property type="gene designation" value="Eea1"/>
</dbReference>
<dbReference type="VEuPathDB" id="HostDB:ENSMUSG00000036499"/>
<dbReference type="eggNOG" id="ENOG502QWB5">
    <property type="taxonomic scope" value="Eukaryota"/>
</dbReference>
<dbReference type="GeneTree" id="ENSGT00940000156910"/>
<dbReference type="HOGENOM" id="CLU_256550_0_0_1"/>
<dbReference type="InParanoid" id="Q8BL66"/>
<dbReference type="OMA" id="FIAVYQH"/>
<dbReference type="PhylomeDB" id="Q8BL66"/>
<dbReference type="TreeFam" id="TF329698"/>
<dbReference type="Reactome" id="R-MMU-168138">
    <property type="pathway name" value="Toll Like Receptor 9 (TLR9) Cascade"/>
</dbReference>
<dbReference type="BioGRID-ORCS" id="216238">
    <property type="hits" value="5 hits in 78 CRISPR screens"/>
</dbReference>
<dbReference type="ChiTaRS" id="Eea1">
    <property type="organism name" value="mouse"/>
</dbReference>
<dbReference type="PRO" id="PR:Q8BL66"/>
<dbReference type="Proteomes" id="UP000000589">
    <property type="component" value="Chromosome 10"/>
</dbReference>
<dbReference type="RNAct" id="Q8BL66">
    <property type="molecule type" value="protein"/>
</dbReference>
<dbReference type="Bgee" id="ENSMUSG00000036499">
    <property type="expression patterns" value="Expressed in animal zygote and 257 other cell types or tissues"/>
</dbReference>
<dbReference type="ExpressionAtlas" id="Q8BL66">
    <property type="expression patterns" value="baseline and differential"/>
</dbReference>
<dbReference type="GO" id="GO:0044308">
    <property type="term" value="C:axonal spine"/>
    <property type="evidence" value="ECO:0000314"/>
    <property type="project" value="MGI"/>
</dbReference>
<dbReference type="GO" id="GO:0031410">
    <property type="term" value="C:cytoplasmic vesicle"/>
    <property type="evidence" value="ECO:0000314"/>
    <property type="project" value="MGI"/>
</dbReference>
<dbReference type="GO" id="GO:0005829">
    <property type="term" value="C:cytosol"/>
    <property type="evidence" value="ECO:0000250"/>
    <property type="project" value="UniProtKB"/>
</dbReference>
<dbReference type="GO" id="GO:0005769">
    <property type="term" value="C:early endosome"/>
    <property type="evidence" value="ECO:0000314"/>
    <property type="project" value="MGI"/>
</dbReference>
<dbReference type="GO" id="GO:0031901">
    <property type="term" value="C:early endosome membrane"/>
    <property type="evidence" value="ECO:0007669"/>
    <property type="project" value="UniProtKB-SubCell"/>
</dbReference>
<dbReference type="GO" id="GO:0005768">
    <property type="term" value="C:endosome"/>
    <property type="evidence" value="ECO:0000314"/>
    <property type="project" value="MGI"/>
</dbReference>
<dbReference type="GO" id="GO:0098978">
    <property type="term" value="C:glutamatergic synapse"/>
    <property type="evidence" value="ECO:0000314"/>
    <property type="project" value="SynGO"/>
</dbReference>
<dbReference type="GO" id="GO:0098842">
    <property type="term" value="C:postsynaptic early endosome"/>
    <property type="evidence" value="ECO:0000314"/>
    <property type="project" value="SynGO"/>
</dbReference>
<dbReference type="GO" id="GO:0098830">
    <property type="term" value="C:presynaptic endosome"/>
    <property type="evidence" value="ECO:0007669"/>
    <property type="project" value="Ensembl"/>
</dbReference>
<dbReference type="GO" id="GO:0055037">
    <property type="term" value="C:recycling endosome"/>
    <property type="evidence" value="ECO:0007669"/>
    <property type="project" value="Ensembl"/>
</dbReference>
<dbReference type="GO" id="GO:0098685">
    <property type="term" value="C:Schaffer collateral - CA1 synapse"/>
    <property type="evidence" value="ECO:0000314"/>
    <property type="project" value="SynGO"/>
</dbReference>
<dbReference type="GO" id="GO:0005545">
    <property type="term" value="F:1-phosphatidylinositol binding"/>
    <property type="evidence" value="ECO:0000250"/>
    <property type="project" value="UniProtKB"/>
</dbReference>
<dbReference type="GO" id="GO:0030742">
    <property type="term" value="F:GTP-dependent protein binding"/>
    <property type="evidence" value="ECO:0007669"/>
    <property type="project" value="Ensembl"/>
</dbReference>
<dbReference type="GO" id="GO:0042803">
    <property type="term" value="F:protein homodimerization activity"/>
    <property type="evidence" value="ECO:0007669"/>
    <property type="project" value="Ensembl"/>
</dbReference>
<dbReference type="GO" id="GO:0008270">
    <property type="term" value="F:zinc ion binding"/>
    <property type="evidence" value="ECO:0007669"/>
    <property type="project" value="UniProtKB-KW"/>
</dbReference>
<dbReference type="GO" id="GO:0099565">
    <property type="term" value="P:chemical synaptic transmission, postsynaptic"/>
    <property type="evidence" value="ECO:0000314"/>
    <property type="project" value="SynGO"/>
</dbReference>
<dbReference type="GO" id="GO:0006897">
    <property type="term" value="P:endocytosis"/>
    <property type="evidence" value="ECO:0000250"/>
    <property type="project" value="UniProtKB"/>
</dbReference>
<dbReference type="GO" id="GO:0044788">
    <property type="term" value="P:modulation by host of viral process"/>
    <property type="evidence" value="ECO:0007669"/>
    <property type="project" value="Ensembl"/>
</dbReference>
<dbReference type="GO" id="GO:0006906">
    <property type="term" value="P:vesicle fusion"/>
    <property type="evidence" value="ECO:0007669"/>
    <property type="project" value="Ensembl"/>
</dbReference>
<dbReference type="CDD" id="cd15730">
    <property type="entry name" value="FYVE_EEA1"/>
    <property type="match status" value="1"/>
</dbReference>
<dbReference type="FunFam" id="1.20.5.390:FF:000006">
    <property type="entry name" value="Early endosome antigen 1"/>
    <property type="match status" value="1"/>
</dbReference>
<dbReference type="FunFam" id="3.30.40.10:FF:000180">
    <property type="entry name" value="Early endosome antigen 1"/>
    <property type="match status" value="1"/>
</dbReference>
<dbReference type="Gene3D" id="1.20.5.390">
    <property type="entry name" value="L1 transposable element, trimerization domain"/>
    <property type="match status" value="1"/>
</dbReference>
<dbReference type="Gene3D" id="3.30.40.10">
    <property type="entry name" value="Zinc/RING finger domain, C3HC4 (zinc finger)"/>
    <property type="match status" value="1"/>
</dbReference>
<dbReference type="InterPro" id="IPR013087">
    <property type="entry name" value="Znf_C2H2_type"/>
</dbReference>
<dbReference type="InterPro" id="IPR000306">
    <property type="entry name" value="Znf_FYVE"/>
</dbReference>
<dbReference type="InterPro" id="IPR017455">
    <property type="entry name" value="Znf_FYVE-rel"/>
</dbReference>
<dbReference type="InterPro" id="IPR011011">
    <property type="entry name" value="Znf_FYVE_PHD"/>
</dbReference>
<dbReference type="InterPro" id="IPR013083">
    <property type="entry name" value="Znf_RING/FYVE/PHD"/>
</dbReference>
<dbReference type="PANTHER" id="PTHR23164">
    <property type="entry name" value="EARLY ENDOSOME ANTIGEN 1"/>
    <property type="match status" value="1"/>
</dbReference>
<dbReference type="PANTHER" id="PTHR23164:SF30">
    <property type="entry name" value="EARLY ENDOSOME ANTIGEN 1"/>
    <property type="match status" value="1"/>
</dbReference>
<dbReference type="Pfam" id="PF01363">
    <property type="entry name" value="FYVE"/>
    <property type="match status" value="1"/>
</dbReference>
<dbReference type="SMART" id="SM00064">
    <property type="entry name" value="FYVE"/>
    <property type="match status" value="1"/>
</dbReference>
<dbReference type="SUPFAM" id="SSF57903">
    <property type="entry name" value="FYVE/PHD zinc finger"/>
    <property type="match status" value="1"/>
</dbReference>
<dbReference type="SUPFAM" id="SSF90257">
    <property type="entry name" value="Myosin rod fragments"/>
    <property type="match status" value="1"/>
</dbReference>
<dbReference type="SUPFAM" id="SSF57997">
    <property type="entry name" value="Tropomyosin"/>
    <property type="match status" value="1"/>
</dbReference>
<dbReference type="PROSITE" id="PS50178">
    <property type="entry name" value="ZF_FYVE"/>
    <property type="match status" value="1"/>
</dbReference>
<dbReference type="PROSITE" id="PS00028">
    <property type="entry name" value="ZINC_FINGER_C2H2_1"/>
    <property type="match status" value="1"/>
</dbReference>
<dbReference type="PROSITE" id="PS50157">
    <property type="entry name" value="ZINC_FINGER_C2H2_2"/>
    <property type="match status" value="1"/>
</dbReference>
<proteinExistence type="evidence at protein level"/>
<protein>
    <recommendedName>
        <fullName>Early endosome antigen 1</fullName>
    </recommendedName>
</protein>
<evidence type="ECO:0000250" key="1"/>
<evidence type="ECO:0000250" key="2">
    <source>
        <dbReference type="UniProtKB" id="Q15075"/>
    </source>
</evidence>
<evidence type="ECO:0000255" key="3"/>
<evidence type="ECO:0000255" key="4">
    <source>
        <dbReference type="PROSITE-ProRule" id="PRU00042"/>
    </source>
</evidence>
<evidence type="ECO:0000255" key="5">
    <source>
        <dbReference type="PROSITE-ProRule" id="PRU00091"/>
    </source>
</evidence>
<evidence type="ECO:0000256" key="6">
    <source>
        <dbReference type="SAM" id="MobiDB-lite"/>
    </source>
</evidence>
<evidence type="ECO:0000305" key="7"/>
<gene>
    <name type="primary">Eea1</name>
</gene>
<accession>Q8BL66</accession>
<accession>Q6DIC2</accession>
<organism>
    <name type="scientific">Mus musculus</name>
    <name type="common">Mouse</name>
    <dbReference type="NCBI Taxonomy" id="10090"/>
    <lineage>
        <taxon>Eukaryota</taxon>
        <taxon>Metazoa</taxon>
        <taxon>Chordata</taxon>
        <taxon>Craniata</taxon>
        <taxon>Vertebrata</taxon>
        <taxon>Euteleostomi</taxon>
        <taxon>Mammalia</taxon>
        <taxon>Eutheria</taxon>
        <taxon>Euarchontoglires</taxon>
        <taxon>Glires</taxon>
        <taxon>Rodentia</taxon>
        <taxon>Myomorpha</taxon>
        <taxon>Muroidea</taxon>
        <taxon>Muridae</taxon>
        <taxon>Murinae</taxon>
        <taxon>Mus</taxon>
        <taxon>Mus</taxon>
    </lineage>
</organism>
<name>EEA1_MOUSE</name>
<keyword id="KW-0175">Coiled coil</keyword>
<keyword id="KW-0963">Cytoplasm</keyword>
<keyword id="KW-0967">Endosome</keyword>
<keyword id="KW-0472">Membrane</keyword>
<keyword id="KW-0479">Metal-binding</keyword>
<keyword id="KW-0597">Phosphoprotein</keyword>
<keyword id="KW-1185">Reference proteome</keyword>
<keyword id="KW-0862">Zinc</keyword>
<keyword id="KW-0863">Zinc-finger</keyword>
<comment type="function">
    <text evidence="1">Binds phospholipid vesicles containing phosphatidylinositol 3-phosphate and participates in endosomal trafficking.</text>
</comment>
<comment type="subunit">
    <text evidence="2">Homodimer. Binds STX6. Binds RAB5A, RAB5B, RAB5C and RAB22A that have been activated by GTP-binding. Interacts with ERBB2 (By similarity). Interacts with RAB31. Interacts with SAMD9 and SAMD9L (By similarity). May interact with PLEKHF2 (By similarity).</text>
</comment>
<comment type="subcellular location">
    <subcellularLocation>
        <location evidence="1">Cytoplasm</location>
    </subcellularLocation>
    <subcellularLocation>
        <location evidence="1">Early endosome membrane</location>
        <topology evidence="1">Peripheral membrane protein</topology>
    </subcellularLocation>
</comment>
<comment type="domain">
    <text evidence="1">The FYVE-type zinc finger domain mediates interactions with phosphatidylinositol 3-phosphate in membranes of early endosomes and penetrates bilayers. The FYVE domain insertion into PtdIns(3)P-enriched membranes is substantially increased in acidic conditions (By similarity).</text>
</comment>
<comment type="sequence caution" evidence="7">
    <conflict type="erroneous termination">
        <sequence resource="EMBL-CDS" id="BAC32647"/>
    </conflict>
    <text>Truncated C-terminus.</text>
</comment>
<sequence>MFRRILQRTPGRVGSQGSDLDSSATPINTVDVNNESSSEGFICPQCMKSLGSADELFKHYQAVHDAGNDSGHGGEAGLALTRDDITLLRQEVQDLQASLKEEKWYSEELKKELEKYQGLQQQEAKSDGLVTDSSAELQALEQQLEEAQTENFNIKQMKDLFEQKAAQLATEIADIKSKYDEEKSLRAAAEQKVTHLTEDLNKQTTVIQDLKTELLQRPGIEDVAVLKKELVQVQTLMDNMTLERERESEKLKDECKKLQSEHAHLEATINQLRSELAKGPQEVAVYVQEIQKLKGSINELTQKNQNLTEKLQKKDLDYTHLEEKHNEESASRKTLQASLHQRDLDCQQLQARLTASESSLQRAQGELSEKAEAAQKLREELREVESTRQHLKVEVKQLQQQREEKEQHGLQLQGEVSQLHCKLLETERQLGEAHGRLKEQRQLSSEKLMEKEQQVADLQLKLSRLEEQLKEKVTNSTELQHQLEKSKQQHQEQQALQQSATAKLREAQNDLEQVLRQIGDKDQKIQNLEALLQKGKESVSLLEKEREDLYAKIQAGEGETAVLNQLQEKNHALQQQLTQLTEKLKNQSESHKQAEENLHDQVQEQKAHLRAAQDRVLSLETSVSELSSQLNESKEKVSQLDIQIKAKTELLLSAEAAKAAQRADLQNHLDTAQHALQDKQQELNKVSVQLDQLTAKFQEKQEHCIQLESHLKDHKEKHLSLEQKVEDLEGHIKKLEADALEVKASKEQALQSLQQQRQLSTDLELRNAELSRELQEQEEVVSCTKLDLQNKSEILENIKQTLTKKEEENVVLKQEFEKLSQDSKTQHKELGDRMQAAVTELTAVKAQKDALLAELSTTKEKLSKVSDSLKNSKSEFEKENQKGKAAVLDLEKACKELKHQLQVQAESALKEQEDLKKSLEKEKETSQQLKIELNSVKGEVSQAQNTLKQKEKDEQQLQGTINQLKQSAEQKKKQIEALQGEVKNAVSQKTVLENKLQQQSSQAAQELAAEKGKLSALQSNYEKCQADLKQLQSDLYGKESELLATRQDLKSVEEKLTLAQEDLISNRNQIGNQNKSIQELQAAKASLEQDSAKKEALLKEQSKALEDAQREKSVKEKELVAEKSKLAEMEEIKCRQEKEITKLNEELKSHKQESIKEITNLKDAKQLLIQQKLELQGRVDSLKAALEQEKESQQLMREQVKKEEEKRKEEFSEKEAKLHSEIKEKEAGMKKHEENEAKLTMQVTTLNENLGTVKKEWQSSQRRVSELEKQTDDLRGEIAVLEATVQNNQDERRALLERCLKGEGEIEKLQTKALELQRKLDNTTAAVQELGRENQSLQIKHTQALNRKWAEDNEVQNCMSCGKCFSVTVRRHHCRQCGNIFCAECSTKNALTPSSKKPVRVCDACFNDLQG</sequence>
<reference key="1">
    <citation type="journal article" date="2004" name="Genome Res.">
        <title>The status, quality, and expansion of the NIH full-length cDNA project: the Mammalian Gene Collection (MGC).</title>
        <authorList>
            <consortium name="The MGC Project Team"/>
        </authorList>
    </citation>
    <scope>NUCLEOTIDE SEQUENCE [LARGE SCALE MRNA]</scope>
    <source>
        <strain>C57BL/6J</strain>
        <tissue>Brain</tissue>
    </source>
</reference>
<reference key="2">
    <citation type="journal article" date="2005" name="Science">
        <title>The transcriptional landscape of the mammalian genome.</title>
        <authorList>
            <person name="Carninci P."/>
            <person name="Kasukawa T."/>
            <person name="Katayama S."/>
            <person name="Gough J."/>
            <person name="Frith M.C."/>
            <person name="Maeda N."/>
            <person name="Oyama R."/>
            <person name="Ravasi T."/>
            <person name="Lenhard B."/>
            <person name="Wells C."/>
            <person name="Kodzius R."/>
            <person name="Shimokawa K."/>
            <person name="Bajic V.B."/>
            <person name="Brenner S.E."/>
            <person name="Batalov S."/>
            <person name="Forrest A.R."/>
            <person name="Zavolan M."/>
            <person name="Davis M.J."/>
            <person name="Wilming L.G."/>
            <person name="Aidinis V."/>
            <person name="Allen J.E."/>
            <person name="Ambesi-Impiombato A."/>
            <person name="Apweiler R."/>
            <person name="Aturaliya R.N."/>
            <person name="Bailey T.L."/>
            <person name="Bansal M."/>
            <person name="Baxter L."/>
            <person name="Beisel K.W."/>
            <person name="Bersano T."/>
            <person name="Bono H."/>
            <person name="Chalk A.M."/>
            <person name="Chiu K.P."/>
            <person name="Choudhary V."/>
            <person name="Christoffels A."/>
            <person name="Clutterbuck D.R."/>
            <person name="Crowe M.L."/>
            <person name="Dalla E."/>
            <person name="Dalrymple B.P."/>
            <person name="de Bono B."/>
            <person name="Della Gatta G."/>
            <person name="di Bernardo D."/>
            <person name="Down T."/>
            <person name="Engstrom P."/>
            <person name="Fagiolini M."/>
            <person name="Faulkner G."/>
            <person name="Fletcher C.F."/>
            <person name="Fukushima T."/>
            <person name="Furuno M."/>
            <person name="Futaki S."/>
            <person name="Gariboldi M."/>
            <person name="Georgii-Hemming P."/>
            <person name="Gingeras T.R."/>
            <person name="Gojobori T."/>
            <person name="Green R.E."/>
            <person name="Gustincich S."/>
            <person name="Harbers M."/>
            <person name="Hayashi Y."/>
            <person name="Hensch T.K."/>
            <person name="Hirokawa N."/>
            <person name="Hill D."/>
            <person name="Huminiecki L."/>
            <person name="Iacono M."/>
            <person name="Ikeo K."/>
            <person name="Iwama A."/>
            <person name="Ishikawa T."/>
            <person name="Jakt M."/>
            <person name="Kanapin A."/>
            <person name="Katoh M."/>
            <person name="Kawasawa Y."/>
            <person name="Kelso J."/>
            <person name="Kitamura H."/>
            <person name="Kitano H."/>
            <person name="Kollias G."/>
            <person name="Krishnan S.P."/>
            <person name="Kruger A."/>
            <person name="Kummerfeld S.K."/>
            <person name="Kurochkin I.V."/>
            <person name="Lareau L.F."/>
            <person name="Lazarevic D."/>
            <person name="Lipovich L."/>
            <person name="Liu J."/>
            <person name="Liuni S."/>
            <person name="McWilliam S."/>
            <person name="Madan Babu M."/>
            <person name="Madera M."/>
            <person name="Marchionni L."/>
            <person name="Matsuda H."/>
            <person name="Matsuzawa S."/>
            <person name="Miki H."/>
            <person name="Mignone F."/>
            <person name="Miyake S."/>
            <person name="Morris K."/>
            <person name="Mottagui-Tabar S."/>
            <person name="Mulder N."/>
            <person name="Nakano N."/>
            <person name="Nakauchi H."/>
            <person name="Ng P."/>
            <person name="Nilsson R."/>
            <person name="Nishiguchi S."/>
            <person name="Nishikawa S."/>
            <person name="Nori F."/>
            <person name="Ohara O."/>
            <person name="Okazaki Y."/>
            <person name="Orlando V."/>
            <person name="Pang K.C."/>
            <person name="Pavan W.J."/>
            <person name="Pavesi G."/>
            <person name="Pesole G."/>
            <person name="Petrovsky N."/>
            <person name="Piazza S."/>
            <person name="Reed J."/>
            <person name="Reid J.F."/>
            <person name="Ring B.Z."/>
            <person name="Ringwald M."/>
            <person name="Rost B."/>
            <person name="Ruan Y."/>
            <person name="Salzberg S.L."/>
            <person name="Sandelin A."/>
            <person name="Schneider C."/>
            <person name="Schoenbach C."/>
            <person name="Sekiguchi K."/>
            <person name="Semple C.A."/>
            <person name="Seno S."/>
            <person name="Sessa L."/>
            <person name="Sheng Y."/>
            <person name="Shibata Y."/>
            <person name="Shimada H."/>
            <person name="Shimada K."/>
            <person name="Silva D."/>
            <person name="Sinclair B."/>
            <person name="Sperling S."/>
            <person name="Stupka E."/>
            <person name="Sugiura K."/>
            <person name="Sultana R."/>
            <person name="Takenaka Y."/>
            <person name="Taki K."/>
            <person name="Tammoja K."/>
            <person name="Tan S.L."/>
            <person name="Tang S."/>
            <person name="Taylor M.S."/>
            <person name="Tegner J."/>
            <person name="Teichmann S.A."/>
            <person name="Ueda H.R."/>
            <person name="van Nimwegen E."/>
            <person name="Verardo R."/>
            <person name="Wei C.L."/>
            <person name="Yagi K."/>
            <person name="Yamanishi H."/>
            <person name="Zabarovsky E."/>
            <person name="Zhu S."/>
            <person name="Zimmer A."/>
            <person name="Hide W."/>
            <person name="Bult C."/>
            <person name="Grimmond S.M."/>
            <person name="Teasdale R.D."/>
            <person name="Liu E.T."/>
            <person name="Brusic V."/>
            <person name="Quackenbush J."/>
            <person name="Wahlestedt C."/>
            <person name="Mattick J.S."/>
            <person name="Hume D.A."/>
            <person name="Kai C."/>
            <person name="Sasaki D."/>
            <person name="Tomaru Y."/>
            <person name="Fukuda S."/>
            <person name="Kanamori-Katayama M."/>
            <person name="Suzuki M."/>
            <person name="Aoki J."/>
            <person name="Arakawa T."/>
            <person name="Iida J."/>
            <person name="Imamura K."/>
            <person name="Itoh M."/>
            <person name="Kato T."/>
            <person name="Kawaji H."/>
            <person name="Kawagashira N."/>
            <person name="Kawashima T."/>
            <person name="Kojima M."/>
            <person name="Kondo S."/>
            <person name="Konno H."/>
            <person name="Nakano K."/>
            <person name="Ninomiya N."/>
            <person name="Nishio T."/>
            <person name="Okada M."/>
            <person name="Plessy C."/>
            <person name="Shibata K."/>
            <person name="Shiraki T."/>
            <person name="Suzuki S."/>
            <person name="Tagami M."/>
            <person name="Waki K."/>
            <person name="Watahiki A."/>
            <person name="Okamura-Oho Y."/>
            <person name="Suzuki H."/>
            <person name="Kawai J."/>
            <person name="Hayashizaki Y."/>
        </authorList>
    </citation>
    <scope>NUCLEOTIDE SEQUENCE [LARGE SCALE MRNA] OF 1-946</scope>
    <source>
        <strain>C57BL/6J</strain>
        <tissue>Brain</tissue>
    </source>
</reference>
<reference key="3">
    <citation type="journal article" date="2010" name="Cell">
        <title>A tissue-specific atlas of mouse protein phosphorylation and expression.</title>
        <authorList>
            <person name="Huttlin E.L."/>
            <person name="Jedrychowski M.P."/>
            <person name="Elias J.E."/>
            <person name="Goswami T."/>
            <person name="Rad R."/>
            <person name="Beausoleil S.A."/>
            <person name="Villen J."/>
            <person name="Haas W."/>
            <person name="Sowa M.E."/>
            <person name="Gygi S.P."/>
        </authorList>
    </citation>
    <scope>IDENTIFICATION BY MASS SPECTROMETRY [LARGE SCALE ANALYSIS]</scope>
    <source>
        <tissue>Brain</tissue>
        <tissue>Brown adipose tissue</tissue>
        <tissue>Heart</tissue>
        <tissue>Kidney</tissue>
        <tissue>Liver</tissue>
        <tissue>Lung</tissue>
        <tissue>Pancreas</tissue>
        <tissue>Spleen</tissue>
        <tissue>Testis</tissue>
    </source>
</reference>
<reference key="4">
    <citation type="journal article" date="2012" name="Proc. Natl. Acad. Sci. U.S.A.">
        <title>p75 neurotrophin receptor regulates glucose homeostasis and insulin sensitivity.</title>
        <authorList>
            <person name="Baeza-Raja B."/>
            <person name="Li P."/>
            <person name="Le Moan N."/>
            <person name="Sachs B.D."/>
            <person name="Schachtrup C."/>
            <person name="Davalos D."/>
            <person name="Vagena E."/>
            <person name="Bridges D."/>
            <person name="Kim C."/>
            <person name="Saltiel A.R."/>
            <person name="Olefsky J.M."/>
            <person name="Akassoglou K."/>
        </authorList>
    </citation>
    <scope>SUBCELLULAR LOCATION</scope>
    <scope>INTERACTION WITH RAB31</scope>
</reference>